<organism>
    <name type="scientific">Sinorhizobium fredii (strain NBRC 101917 / NGR234)</name>
    <dbReference type="NCBI Taxonomy" id="394"/>
    <lineage>
        <taxon>Bacteria</taxon>
        <taxon>Pseudomonadati</taxon>
        <taxon>Pseudomonadota</taxon>
        <taxon>Alphaproteobacteria</taxon>
        <taxon>Hyphomicrobiales</taxon>
        <taxon>Rhizobiaceae</taxon>
        <taxon>Sinorhizobium/Ensifer group</taxon>
        <taxon>Sinorhizobium</taxon>
    </lineage>
</organism>
<reference key="1">
    <citation type="journal article" date="2009" name="Appl. Environ. Microbiol.">
        <title>Rhizobium sp. strain NGR234 possesses a remarkable number of secretion systems.</title>
        <authorList>
            <person name="Schmeisser C."/>
            <person name="Liesegang H."/>
            <person name="Krysciak D."/>
            <person name="Bakkou N."/>
            <person name="Le Quere A."/>
            <person name="Wollherr A."/>
            <person name="Heinemeyer I."/>
            <person name="Morgenstern B."/>
            <person name="Pommerening-Roeser A."/>
            <person name="Flores M."/>
            <person name="Palacios R."/>
            <person name="Brenner S."/>
            <person name="Gottschalk G."/>
            <person name="Schmitz R.A."/>
            <person name="Broughton W.J."/>
            <person name="Perret X."/>
            <person name="Strittmatter A.W."/>
            <person name="Streit W.R."/>
        </authorList>
    </citation>
    <scope>NUCLEOTIDE SEQUENCE [LARGE SCALE GENOMIC DNA]</scope>
    <source>
        <strain>NBRC 101917 / NGR234</strain>
    </source>
</reference>
<dbReference type="EC" id="2.1.1.177" evidence="1"/>
<dbReference type="EMBL" id="CP001389">
    <property type="protein sequence ID" value="ACP26909.1"/>
    <property type="molecule type" value="Genomic_DNA"/>
</dbReference>
<dbReference type="RefSeq" id="WP_012709660.1">
    <property type="nucleotide sequence ID" value="NC_012587.1"/>
</dbReference>
<dbReference type="RefSeq" id="YP_002827662.1">
    <property type="nucleotide sequence ID" value="NC_012587.1"/>
</dbReference>
<dbReference type="SMR" id="C3M9Y4"/>
<dbReference type="STRING" id="394.NGR_c31750"/>
<dbReference type="KEGG" id="rhi:NGR_c31750"/>
<dbReference type="PATRIC" id="fig|394.7.peg.6013"/>
<dbReference type="eggNOG" id="COG1576">
    <property type="taxonomic scope" value="Bacteria"/>
</dbReference>
<dbReference type="HOGENOM" id="CLU_100552_1_1_5"/>
<dbReference type="OrthoDB" id="9806643at2"/>
<dbReference type="Proteomes" id="UP000001054">
    <property type="component" value="Chromosome"/>
</dbReference>
<dbReference type="GO" id="GO:0005737">
    <property type="term" value="C:cytoplasm"/>
    <property type="evidence" value="ECO:0007669"/>
    <property type="project" value="UniProtKB-SubCell"/>
</dbReference>
<dbReference type="GO" id="GO:0070038">
    <property type="term" value="F:rRNA (pseudouridine-N3-)-methyltransferase activity"/>
    <property type="evidence" value="ECO:0007669"/>
    <property type="project" value="UniProtKB-UniRule"/>
</dbReference>
<dbReference type="CDD" id="cd18081">
    <property type="entry name" value="RlmH-like"/>
    <property type="match status" value="1"/>
</dbReference>
<dbReference type="Gene3D" id="3.40.1280.10">
    <property type="match status" value="1"/>
</dbReference>
<dbReference type="HAMAP" id="MF_00658">
    <property type="entry name" value="23SrRNA_methyltr_H"/>
    <property type="match status" value="1"/>
</dbReference>
<dbReference type="InterPro" id="IPR029028">
    <property type="entry name" value="Alpha/beta_knot_MTases"/>
</dbReference>
<dbReference type="InterPro" id="IPR003742">
    <property type="entry name" value="RlmH-like"/>
</dbReference>
<dbReference type="InterPro" id="IPR029026">
    <property type="entry name" value="tRNA_m1G_MTases_N"/>
</dbReference>
<dbReference type="NCBIfam" id="NF000989">
    <property type="entry name" value="PRK00103.2-3"/>
    <property type="match status" value="1"/>
</dbReference>
<dbReference type="PANTHER" id="PTHR33603">
    <property type="entry name" value="METHYLTRANSFERASE"/>
    <property type="match status" value="1"/>
</dbReference>
<dbReference type="PANTHER" id="PTHR33603:SF1">
    <property type="entry name" value="RIBOSOMAL RNA LARGE SUBUNIT METHYLTRANSFERASE H"/>
    <property type="match status" value="1"/>
</dbReference>
<dbReference type="Pfam" id="PF02590">
    <property type="entry name" value="SPOUT_MTase"/>
    <property type="match status" value="1"/>
</dbReference>
<dbReference type="PIRSF" id="PIRSF004505">
    <property type="entry name" value="MT_bac"/>
    <property type="match status" value="1"/>
</dbReference>
<dbReference type="SUPFAM" id="SSF75217">
    <property type="entry name" value="alpha/beta knot"/>
    <property type="match status" value="1"/>
</dbReference>
<comment type="function">
    <text evidence="1">Specifically methylates the pseudouridine at position 1915 (m3Psi1915) in 23S rRNA.</text>
</comment>
<comment type="catalytic activity">
    <reaction evidence="1">
        <text>pseudouridine(1915) in 23S rRNA + S-adenosyl-L-methionine = N(3)-methylpseudouridine(1915) in 23S rRNA + S-adenosyl-L-homocysteine + H(+)</text>
        <dbReference type="Rhea" id="RHEA:42752"/>
        <dbReference type="Rhea" id="RHEA-COMP:10221"/>
        <dbReference type="Rhea" id="RHEA-COMP:10222"/>
        <dbReference type="ChEBI" id="CHEBI:15378"/>
        <dbReference type="ChEBI" id="CHEBI:57856"/>
        <dbReference type="ChEBI" id="CHEBI:59789"/>
        <dbReference type="ChEBI" id="CHEBI:65314"/>
        <dbReference type="ChEBI" id="CHEBI:74486"/>
        <dbReference type="EC" id="2.1.1.177"/>
    </reaction>
</comment>
<comment type="subunit">
    <text evidence="1">Homodimer.</text>
</comment>
<comment type="subcellular location">
    <subcellularLocation>
        <location evidence="1">Cytoplasm</location>
    </subcellularLocation>
</comment>
<comment type="similarity">
    <text evidence="1">Belongs to the RNA methyltransferase RlmH family.</text>
</comment>
<protein>
    <recommendedName>
        <fullName evidence="1">Ribosomal RNA large subunit methyltransferase H</fullName>
        <ecNumber evidence="1">2.1.1.177</ecNumber>
    </recommendedName>
    <alternativeName>
        <fullName evidence="1">23S rRNA (pseudouridine1915-N3)-methyltransferase</fullName>
    </alternativeName>
    <alternativeName>
        <fullName evidence="1">23S rRNA m3Psi1915 methyltransferase</fullName>
    </alternativeName>
    <alternativeName>
        <fullName evidence="1">rRNA (pseudouridine-N3-)-methyltransferase RlmH</fullName>
    </alternativeName>
</protein>
<evidence type="ECO:0000255" key="1">
    <source>
        <dbReference type="HAMAP-Rule" id="MF_00658"/>
    </source>
</evidence>
<gene>
    <name evidence="1" type="primary">rlmH</name>
    <name type="ordered locus">NGR_c31750</name>
</gene>
<accession>C3M9Y4</accession>
<proteinExistence type="inferred from homology"/>
<name>RLMH_SINFN</name>
<keyword id="KW-0963">Cytoplasm</keyword>
<keyword id="KW-0489">Methyltransferase</keyword>
<keyword id="KW-1185">Reference proteome</keyword>
<keyword id="KW-0698">rRNA processing</keyword>
<keyword id="KW-0949">S-adenosyl-L-methionine</keyword>
<keyword id="KW-0808">Transferase</keyword>
<feature type="chain" id="PRO_1000199825" description="Ribosomal RNA large subunit methyltransferase H">
    <location>
        <begin position="1"/>
        <end position="160"/>
    </location>
</feature>
<feature type="binding site" evidence="1">
    <location>
        <position position="76"/>
    </location>
    <ligand>
        <name>S-adenosyl-L-methionine</name>
        <dbReference type="ChEBI" id="CHEBI:59789"/>
    </ligand>
</feature>
<feature type="binding site" evidence="1">
    <location>
        <position position="108"/>
    </location>
    <ligand>
        <name>S-adenosyl-L-methionine</name>
        <dbReference type="ChEBI" id="CHEBI:59789"/>
    </ligand>
</feature>
<feature type="binding site" evidence="1">
    <location>
        <begin position="127"/>
        <end position="132"/>
    </location>
    <ligand>
        <name>S-adenosyl-L-methionine</name>
        <dbReference type="ChEBI" id="CHEBI:59789"/>
    </ligand>
</feature>
<sequence length="160" mass="17352">MRIGLFAVGRLKAGPEKDLAARYLDRFAKAGPAVGLELARLVEINESRAANAQTRKREEAAQLEKTLADGSLLLLLDERGKALDSESFATLLGTFRDGGKRDLMIAIGGADGLDPALHARADAVLCLGKMTWPHQLVRILIAEQLYRAVTILAGHPYHRA</sequence>